<reference key="1">
    <citation type="journal article" date="1999" name="J. Invest. Dermatol.">
        <title>Clustering of activating mutations in c-KIT's juxtamembrane coding region in canine mast cell neoplasms.</title>
        <authorList>
            <person name="Ma Y."/>
            <person name="Longley B.J."/>
            <person name="Wang X."/>
            <person name="Blount J.L."/>
            <person name="Langley K."/>
            <person name="Caughey G.H."/>
        </authorList>
    </citation>
    <scope>NUCLEOTIDE SEQUENCE [MRNA] (ISOFORM 2)</scope>
</reference>
<reference key="2">
    <citation type="submission" date="2001-11" db="EMBL/GenBank/DDBJ databases">
        <authorList>
            <person name="Zemke D."/>
            <person name="Yuzbasiyan-Gurkan V."/>
        </authorList>
    </citation>
    <scope>NUCLEOTIDE SEQUENCE [MRNA] (ISOFORM 1)</scope>
</reference>
<reference key="3">
    <citation type="submission" date="2003-05" db="EMBL/GenBank/DDBJ databases">
        <title>Characterization of an isoform and RH mapping of canine c-kit.</title>
        <authorList>
            <person name="Tsai K.L."/>
            <person name="Guyon R."/>
            <person name="Murphy K.E."/>
        </authorList>
    </citation>
    <scope>NUCLEOTIDE SEQUENCE [MRNA] (ISOFORMS 1 AND 2)</scope>
</reference>
<gene>
    <name type="primary">KIT</name>
</gene>
<keyword id="KW-0025">Alternative splicing</keyword>
<keyword id="KW-0067">ATP-binding</keyword>
<keyword id="KW-1003">Cell membrane</keyword>
<keyword id="KW-1015">Disulfide bond</keyword>
<keyword id="KW-0325">Glycoprotein</keyword>
<keyword id="KW-0393">Immunoglobulin domain</keyword>
<keyword id="KW-0418">Kinase</keyword>
<keyword id="KW-0460">Magnesium</keyword>
<keyword id="KW-0472">Membrane</keyword>
<keyword id="KW-0479">Metal-binding</keyword>
<keyword id="KW-0547">Nucleotide-binding</keyword>
<keyword id="KW-0597">Phosphoprotein</keyword>
<keyword id="KW-0656">Proto-oncogene</keyword>
<keyword id="KW-0675">Receptor</keyword>
<keyword id="KW-1185">Reference proteome</keyword>
<keyword id="KW-0677">Repeat</keyword>
<keyword id="KW-0732">Signal</keyword>
<keyword id="KW-0808">Transferase</keyword>
<keyword id="KW-0812">Transmembrane</keyword>
<keyword id="KW-1133">Transmembrane helix</keyword>
<keyword id="KW-0829">Tyrosine-protein kinase</keyword>
<keyword id="KW-0832">Ubl conjugation</keyword>
<feature type="signal peptide" evidence="4">
    <location>
        <begin position="1"/>
        <end position="27"/>
    </location>
</feature>
<feature type="chain" id="PRO_0000016751" description="Mast/stem cell growth factor receptor Kit">
    <location>
        <begin position="28"/>
        <end position="979"/>
    </location>
</feature>
<feature type="topological domain" description="Extracellular" evidence="4">
    <location>
        <begin position="28"/>
        <end position="527"/>
    </location>
</feature>
<feature type="transmembrane region" description="Helical" evidence="4">
    <location>
        <begin position="528"/>
        <end position="548"/>
    </location>
</feature>
<feature type="topological domain" description="Cytoplasmic" evidence="4">
    <location>
        <begin position="549"/>
        <end position="979"/>
    </location>
</feature>
<feature type="domain" description="Ig-like C2-type 1">
    <location>
        <begin position="29"/>
        <end position="114"/>
    </location>
</feature>
<feature type="domain" description="Ig-like C2-type 2">
    <location>
        <begin position="123"/>
        <end position="207"/>
    </location>
</feature>
<feature type="domain" description="Ig-like C2-type 3">
    <location>
        <begin position="214"/>
        <end position="311"/>
    </location>
</feature>
<feature type="domain" description="Ig-like C2-type 4">
    <location>
        <begin position="320"/>
        <end position="413"/>
    </location>
</feature>
<feature type="domain" description="Ig-like C2-type 5">
    <location>
        <begin position="416"/>
        <end position="510"/>
    </location>
</feature>
<feature type="domain" description="Protein kinase" evidence="6">
    <location>
        <begin position="592"/>
        <end position="940"/>
    </location>
</feature>
<feature type="region of interest" description="Important for interaction with phosphotyrosine-binding proteins" evidence="1">
    <location>
        <begin position="571"/>
        <end position="573"/>
    </location>
</feature>
<feature type="active site" description="Proton acceptor" evidence="6 7">
    <location>
        <position position="795"/>
    </location>
</feature>
<feature type="binding site" evidence="1">
    <location>
        <position position="571"/>
    </location>
    <ligand>
        <name>Mg(2+)</name>
        <dbReference type="ChEBI" id="CHEBI:18420"/>
    </ligand>
</feature>
<feature type="binding site" evidence="6">
    <location>
        <begin position="599"/>
        <end position="606"/>
    </location>
    <ligand>
        <name>ATP</name>
        <dbReference type="ChEBI" id="CHEBI:30616"/>
    </ligand>
</feature>
<feature type="binding site" evidence="6">
    <location>
        <position position="626"/>
    </location>
    <ligand>
        <name>ATP</name>
        <dbReference type="ChEBI" id="CHEBI:30616"/>
    </ligand>
</feature>
<feature type="binding site" evidence="6">
    <location>
        <begin position="674"/>
        <end position="680"/>
    </location>
    <ligand>
        <name>ATP</name>
        <dbReference type="ChEBI" id="CHEBI:30616"/>
    </ligand>
</feature>
<feature type="binding site" evidence="6">
    <location>
        <position position="799"/>
    </location>
    <ligand>
        <name>ATP</name>
        <dbReference type="ChEBI" id="CHEBI:30616"/>
    </ligand>
</feature>
<feature type="binding site" evidence="1">
    <location>
        <position position="800"/>
    </location>
    <ligand>
        <name>Mg(2+)</name>
        <dbReference type="ChEBI" id="CHEBI:18420"/>
    </ligand>
</feature>
<feature type="binding site" evidence="1">
    <location>
        <position position="813"/>
    </location>
    <ligand>
        <name>Mg(2+)</name>
        <dbReference type="ChEBI" id="CHEBI:18420"/>
    </ligand>
</feature>
<feature type="site" description="Interaction with SH2B2/APS" evidence="1">
    <location>
        <position position="571"/>
    </location>
</feature>
<feature type="site" description="Important for interaction with phosphotyrosine-binding proteins" evidence="1">
    <location>
        <position position="939"/>
    </location>
</feature>
<feature type="site" description="Interaction with SH2B2/APS" evidence="1">
    <location>
        <position position="939"/>
    </location>
</feature>
<feature type="modified residue" description="Phosphotyrosine; by autocatalysis" evidence="3">
    <location>
        <position position="550"/>
    </location>
</feature>
<feature type="modified residue" description="Phosphotyrosine; by autocatalysis" evidence="3">
    <location>
        <position position="556"/>
    </location>
</feature>
<feature type="modified residue" description="Phosphotyrosine; by autocatalysis" evidence="3">
    <location>
        <position position="571"/>
    </location>
</feature>
<feature type="modified residue" description="Phosphotyrosine; by autocatalysis" evidence="3">
    <location>
        <position position="573"/>
    </location>
</feature>
<feature type="modified residue" description="Phosphotyrosine; by autocatalysis" evidence="3">
    <location>
        <position position="706"/>
    </location>
</feature>
<feature type="modified residue" description="Phosphotyrosine; by autocatalysis" evidence="3">
    <location>
        <position position="724"/>
    </location>
</feature>
<feature type="modified residue" description="Phosphotyrosine; by autocatalysis" evidence="3">
    <location>
        <position position="733"/>
    </location>
</feature>
<feature type="modified residue" description="Phosphoserine; by PKC/PRKCA" evidence="3">
    <location>
        <position position="744"/>
    </location>
</feature>
<feature type="modified residue" description="Phosphoserine; by PKC/PRKCA" evidence="3">
    <location>
        <position position="749"/>
    </location>
</feature>
<feature type="modified residue" description="Phosphoserine" evidence="3">
    <location>
        <position position="824"/>
    </location>
</feature>
<feature type="modified residue" description="Phosphotyrosine; by autocatalysis" evidence="3">
    <location>
        <position position="826"/>
    </location>
</feature>
<feature type="modified residue" description="Phosphoserine" evidence="3">
    <location>
        <position position="894"/>
    </location>
</feature>
<feature type="modified residue" description="Phosphotyrosine; by autocatalysis" evidence="3">
    <location>
        <position position="903"/>
    </location>
</feature>
<feature type="modified residue" description="Phosphotyrosine; by autocatalysis" evidence="3">
    <location>
        <position position="939"/>
    </location>
</feature>
<feature type="modified residue" description="Phosphoserine" evidence="3">
    <location>
        <position position="962"/>
    </location>
</feature>
<feature type="glycosylation site" description="N-linked (GlcNAc...) asparagine" evidence="4">
    <location>
        <position position="96"/>
    </location>
</feature>
<feature type="glycosylation site" description="N-linked (GlcNAc...) asparagine" evidence="4">
    <location>
        <position position="132"/>
    </location>
</feature>
<feature type="glycosylation site" description="N-linked (GlcNAc...) asparagine" evidence="4">
    <location>
        <position position="147"/>
    </location>
</feature>
<feature type="glycosylation site" description="N-linked (GlcNAc...) asparagine" evidence="4">
    <location>
        <position position="286"/>
    </location>
</feature>
<feature type="glycosylation site" description="N-linked (GlcNAc...) asparagine" evidence="4">
    <location>
        <position position="296"/>
    </location>
</feature>
<feature type="glycosylation site" description="N-linked (GlcNAc...) asparagine" evidence="4">
    <location>
        <position position="303"/>
    </location>
</feature>
<feature type="glycosylation site" description="N-linked (GlcNAc...) asparagine" evidence="4">
    <location>
        <position position="355"/>
    </location>
</feature>
<feature type="glycosylation site" description="N-linked (GlcNAc...) asparagine" evidence="4">
    <location>
        <position position="370"/>
    </location>
</feature>
<feature type="glycosylation site" description="N-linked (GlcNAc...) asparagine" evidence="4">
    <location>
        <position position="403"/>
    </location>
</feature>
<feature type="glycosylation site" description="N-linked (GlcNAc...) asparagine" evidence="4">
    <location>
        <position position="466"/>
    </location>
</feature>
<feature type="glycosylation site" description="N-linked (GlcNAc...) asparagine" evidence="4">
    <location>
        <position position="489"/>
    </location>
</feature>
<feature type="disulfide bond" evidence="5">
    <location>
        <begin position="60"/>
        <end position="99"/>
    </location>
</feature>
<feature type="disulfide bond" evidence="5">
    <location>
        <begin position="138"/>
        <end position="188"/>
    </location>
</feature>
<feature type="disulfide bond" evidence="5">
    <location>
        <begin position="153"/>
        <end position="185"/>
    </location>
</feature>
<feature type="disulfide bond" evidence="5">
    <location>
        <begin position="235"/>
        <end position="293"/>
    </location>
</feature>
<feature type="disulfide bond" evidence="5">
    <location>
        <begin position="431"/>
        <end position="494"/>
    </location>
</feature>
<feature type="splice variant" id="VSP_020224" description="In isoform 2." evidence="8 9">
    <location>
        <begin position="512"/>
        <end position="515"/>
    </location>
</feature>
<feature type="sequence conflict" description="In Ref. 1; AAD02327." evidence="10" ref="1">
    <original>Q</original>
    <variation>R</variation>
    <location>
        <position position="23"/>
    </location>
</feature>
<feature type="sequence conflict" description="In Ref. 1; AAD02327." evidence="10" ref="1">
    <original>E</original>
    <variation>Q</variation>
    <location>
        <position position="332"/>
    </location>
</feature>
<feature type="sequence conflict" description="In Ref. 1; AAD02327." evidence="10" ref="1">
    <original>D</original>
    <variation>G</variation>
    <location>
        <position position="442"/>
    </location>
</feature>
<name>KIT_CANLF</name>
<accession>O97799</accession>
<accession>Q7YRV7</accession>
<accession>Q8WN23</accession>
<proteinExistence type="evidence at transcript level"/>
<dbReference type="EC" id="2.7.10.1"/>
<dbReference type="EMBL" id="AF044249">
    <property type="protein sequence ID" value="AAD02327.1"/>
    <property type="molecule type" value="mRNA"/>
</dbReference>
<dbReference type="EMBL" id="AF448148">
    <property type="protein sequence ID" value="AAL40833.1"/>
    <property type="molecule type" value="mRNA"/>
</dbReference>
<dbReference type="EMBL" id="AY296484">
    <property type="protein sequence ID" value="AAP51178.1"/>
    <property type="molecule type" value="mRNA"/>
</dbReference>
<dbReference type="EMBL" id="AY313776">
    <property type="protein sequence ID" value="AAP76390.1"/>
    <property type="molecule type" value="mRNA"/>
</dbReference>
<dbReference type="RefSeq" id="NP_001003181.1">
    <property type="nucleotide sequence ID" value="NM_001003181.1"/>
</dbReference>
<dbReference type="RefSeq" id="XP_005628025.1">
    <property type="nucleotide sequence ID" value="XM_005627968.2"/>
</dbReference>
<dbReference type="RefSeq" id="XP_038540451.1">
    <molecule id="O97799-1"/>
    <property type="nucleotide sequence ID" value="XM_038684523.1"/>
</dbReference>
<dbReference type="SMR" id="O97799"/>
<dbReference type="FunCoup" id="O97799">
    <property type="interactions" value="453"/>
</dbReference>
<dbReference type="STRING" id="9615.ENSCAFP00000003042"/>
<dbReference type="ChEMBL" id="CHEMBL5303563"/>
<dbReference type="GlyCosmos" id="O97799">
    <property type="glycosylation" value="11 sites, No reported glycans"/>
</dbReference>
<dbReference type="PaxDb" id="9612-ENSCAFP00000039467"/>
<dbReference type="Ensembl" id="ENSCAFT00000003274.5">
    <molecule id="O97799-1"/>
    <property type="protein sequence ID" value="ENSCAFP00000003042.5"/>
    <property type="gene ID" value="ENSCAFG00000002065.6"/>
</dbReference>
<dbReference type="Ensembl" id="ENSCAFT00030034940.1">
    <molecule id="O97799-2"/>
    <property type="protein sequence ID" value="ENSCAFP00030030471.1"/>
    <property type="gene ID" value="ENSCAFG00030018961.1"/>
</dbReference>
<dbReference type="Ensembl" id="ENSCAFT00040028950.1">
    <molecule id="O97799-2"/>
    <property type="protein sequence ID" value="ENSCAFP00040025147.1"/>
    <property type="gene ID" value="ENSCAFG00040015724.1"/>
</dbReference>
<dbReference type="Ensembl" id="ENSCAFT00845021185.1">
    <molecule id="O97799-1"/>
    <property type="protein sequence ID" value="ENSCAFP00845016654.1"/>
    <property type="gene ID" value="ENSCAFG00845011904.1"/>
</dbReference>
<dbReference type="GeneID" id="403811"/>
<dbReference type="KEGG" id="cfa:403811"/>
<dbReference type="CTD" id="3815"/>
<dbReference type="VEuPathDB" id="HostDB:ENSCAFG00845011904"/>
<dbReference type="eggNOG" id="KOG0200">
    <property type="taxonomic scope" value="Eukaryota"/>
</dbReference>
<dbReference type="GeneTree" id="ENSGT00940000155626"/>
<dbReference type="InParanoid" id="O97799"/>
<dbReference type="OMA" id="CDSTNEY"/>
<dbReference type="OrthoDB" id="6077854at2759"/>
<dbReference type="TreeFam" id="TF325768"/>
<dbReference type="BRENDA" id="2.7.10.1">
    <property type="organism ID" value="1153"/>
</dbReference>
<dbReference type="Reactome" id="R-CFA-1257604">
    <property type="pathway name" value="PIP3 activates AKT signaling"/>
</dbReference>
<dbReference type="Reactome" id="R-CFA-1433557">
    <property type="pathway name" value="Signaling by SCF-KIT"/>
</dbReference>
<dbReference type="Reactome" id="R-CFA-1433559">
    <property type="pathway name" value="Regulation of KIT signaling"/>
</dbReference>
<dbReference type="Reactome" id="R-CFA-5673001">
    <property type="pathway name" value="RAF/MAP kinase cascade"/>
</dbReference>
<dbReference type="Reactome" id="R-CFA-6811558">
    <property type="pathway name" value="PI5P, PP2A and IER3 Regulate PI3K/AKT Signaling"/>
</dbReference>
<dbReference type="Reactome" id="R-CFA-9856649">
    <property type="pathway name" value="Transcriptional and post-translational regulation of MITF-M expression and activity"/>
</dbReference>
<dbReference type="Proteomes" id="UP000002254">
    <property type="component" value="Chromosome 13"/>
</dbReference>
<dbReference type="Proteomes" id="UP000694429">
    <property type="component" value="Chromosome 13"/>
</dbReference>
<dbReference type="Proteomes" id="UP000694542">
    <property type="component" value="Chromosome 13"/>
</dbReference>
<dbReference type="Proteomes" id="UP000805418">
    <property type="component" value="Chromosome 13"/>
</dbReference>
<dbReference type="Bgee" id="ENSCAFG00000002065">
    <property type="expression patterns" value="Expressed in bone marrow and 45 other cell types or tissues"/>
</dbReference>
<dbReference type="GO" id="GO:0005911">
    <property type="term" value="C:cell-cell junction"/>
    <property type="evidence" value="ECO:0007669"/>
    <property type="project" value="Ensembl"/>
</dbReference>
<dbReference type="GO" id="GO:0009897">
    <property type="term" value="C:external side of plasma membrane"/>
    <property type="evidence" value="ECO:0007669"/>
    <property type="project" value="Ensembl"/>
</dbReference>
<dbReference type="GO" id="GO:0005615">
    <property type="term" value="C:extracellular space"/>
    <property type="evidence" value="ECO:0007669"/>
    <property type="project" value="Ensembl"/>
</dbReference>
<dbReference type="GO" id="GO:0001650">
    <property type="term" value="C:fibrillar center"/>
    <property type="evidence" value="ECO:0007669"/>
    <property type="project" value="Ensembl"/>
</dbReference>
<dbReference type="GO" id="GO:0005886">
    <property type="term" value="C:plasma membrane"/>
    <property type="evidence" value="ECO:0000318"/>
    <property type="project" value="GO_Central"/>
</dbReference>
<dbReference type="GO" id="GO:0043235">
    <property type="term" value="C:receptor complex"/>
    <property type="evidence" value="ECO:0000318"/>
    <property type="project" value="GO_Central"/>
</dbReference>
<dbReference type="GO" id="GO:0005524">
    <property type="term" value="F:ATP binding"/>
    <property type="evidence" value="ECO:0007669"/>
    <property type="project" value="UniProtKB-KW"/>
</dbReference>
<dbReference type="GO" id="GO:0019955">
    <property type="term" value="F:cytokine binding"/>
    <property type="evidence" value="ECO:0000250"/>
    <property type="project" value="UniProtKB"/>
</dbReference>
<dbReference type="GO" id="GO:0019838">
    <property type="term" value="F:growth factor binding"/>
    <property type="evidence" value="ECO:0000318"/>
    <property type="project" value="GO_Central"/>
</dbReference>
<dbReference type="GO" id="GO:0046872">
    <property type="term" value="F:metal ion binding"/>
    <property type="evidence" value="ECO:0007669"/>
    <property type="project" value="UniProtKB-KW"/>
</dbReference>
<dbReference type="GO" id="GO:0002020">
    <property type="term" value="F:protease binding"/>
    <property type="evidence" value="ECO:0007669"/>
    <property type="project" value="Ensembl"/>
</dbReference>
<dbReference type="GO" id="GO:0042803">
    <property type="term" value="F:protein homodimerization activity"/>
    <property type="evidence" value="ECO:0007669"/>
    <property type="project" value="Ensembl"/>
</dbReference>
<dbReference type="GO" id="GO:0042169">
    <property type="term" value="F:SH2 domain binding"/>
    <property type="evidence" value="ECO:0007669"/>
    <property type="project" value="Ensembl"/>
</dbReference>
<dbReference type="GO" id="GO:0005020">
    <property type="term" value="F:stem cell factor receptor activity"/>
    <property type="evidence" value="ECO:0007669"/>
    <property type="project" value="Ensembl"/>
</dbReference>
<dbReference type="GO" id="GO:0004714">
    <property type="term" value="F:transmembrane receptor protein tyrosine kinase activity"/>
    <property type="evidence" value="ECO:0000250"/>
    <property type="project" value="UniProtKB"/>
</dbReference>
<dbReference type="GO" id="GO:0030036">
    <property type="term" value="P:actin cytoskeleton organization"/>
    <property type="evidence" value="ECO:0000250"/>
    <property type="project" value="UniProtKB"/>
</dbReference>
<dbReference type="GO" id="GO:0030183">
    <property type="term" value="P:B cell differentiation"/>
    <property type="evidence" value="ECO:0000318"/>
    <property type="project" value="GO_Central"/>
</dbReference>
<dbReference type="GO" id="GO:0060326">
    <property type="term" value="P:cell chemotaxis"/>
    <property type="evidence" value="ECO:0000250"/>
    <property type="project" value="UniProtKB"/>
</dbReference>
<dbReference type="GO" id="GO:0016477">
    <property type="term" value="P:cell migration"/>
    <property type="evidence" value="ECO:0000318"/>
    <property type="project" value="GO_Central"/>
</dbReference>
<dbReference type="GO" id="GO:0019221">
    <property type="term" value="P:cytokine-mediated signaling pathway"/>
    <property type="evidence" value="ECO:0000250"/>
    <property type="project" value="UniProtKB"/>
</dbReference>
<dbReference type="GO" id="GO:0050910">
    <property type="term" value="P:detection of mechanical stimulus involved in sensory perception of sound"/>
    <property type="evidence" value="ECO:0000250"/>
    <property type="project" value="UniProtKB"/>
</dbReference>
<dbReference type="GO" id="GO:0048565">
    <property type="term" value="P:digestive tract development"/>
    <property type="evidence" value="ECO:0000250"/>
    <property type="project" value="UniProtKB"/>
</dbReference>
<dbReference type="GO" id="GO:0035234">
    <property type="term" value="P:ectopic germ cell programmed cell death"/>
    <property type="evidence" value="ECO:0007669"/>
    <property type="project" value="Ensembl"/>
</dbReference>
<dbReference type="GO" id="GO:0035162">
    <property type="term" value="P:embryonic hemopoiesis"/>
    <property type="evidence" value="ECO:0000250"/>
    <property type="project" value="UniProtKB"/>
</dbReference>
<dbReference type="GO" id="GO:0030218">
    <property type="term" value="P:erythrocyte differentiation"/>
    <property type="evidence" value="ECO:0000250"/>
    <property type="project" value="UniProtKB"/>
</dbReference>
<dbReference type="GO" id="GO:0038162">
    <property type="term" value="P:erythropoietin-mediated signaling pathway"/>
    <property type="evidence" value="ECO:0000250"/>
    <property type="project" value="UniProtKB"/>
</dbReference>
<dbReference type="GO" id="GO:0038093">
    <property type="term" value="P:Fc receptor signaling pathway"/>
    <property type="evidence" value="ECO:0000250"/>
    <property type="project" value="UniProtKB"/>
</dbReference>
<dbReference type="GO" id="GO:0006687">
    <property type="term" value="P:glycosphingolipid metabolic process"/>
    <property type="evidence" value="ECO:0007669"/>
    <property type="project" value="Ensembl"/>
</dbReference>
<dbReference type="GO" id="GO:0002244">
    <property type="term" value="P:hematopoietic progenitor cell differentiation"/>
    <property type="evidence" value="ECO:0000318"/>
    <property type="project" value="GO_Central"/>
</dbReference>
<dbReference type="GO" id="GO:0035701">
    <property type="term" value="P:hematopoietic stem cell migration"/>
    <property type="evidence" value="ECO:0007669"/>
    <property type="project" value="Ensembl"/>
</dbReference>
<dbReference type="GO" id="GO:0002327">
    <property type="term" value="P:immature B cell differentiation"/>
    <property type="evidence" value="ECO:0000250"/>
    <property type="project" value="UniProtKB"/>
</dbReference>
<dbReference type="GO" id="GO:0006954">
    <property type="term" value="P:inflammatory response"/>
    <property type="evidence" value="ECO:0000250"/>
    <property type="project" value="UniProtKB"/>
</dbReference>
<dbReference type="GO" id="GO:0035556">
    <property type="term" value="P:intracellular signal transduction"/>
    <property type="evidence" value="ECO:0007669"/>
    <property type="project" value="Ensembl"/>
</dbReference>
<dbReference type="GO" id="GO:0038109">
    <property type="term" value="P:Kit signaling pathway"/>
    <property type="evidence" value="ECO:0000250"/>
    <property type="project" value="UniProtKB"/>
</dbReference>
<dbReference type="GO" id="GO:0030032">
    <property type="term" value="P:lamellipodium assembly"/>
    <property type="evidence" value="ECO:0000250"/>
    <property type="project" value="UniProtKB"/>
</dbReference>
<dbReference type="GO" id="GO:0002320">
    <property type="term" value="P:lymphoid progenitor cell differentiation"/>
    <property type="evidence" value="ECO:0007669"/>
    <property type="project" value="Ensembl"/>
</dbReference>
<dbReference type="GO" id="GO:0008584">
    <property type="term" value="P:male gonad development"/>
    <property type="evidence" value="ECO:0007669"/>
    <property type="project" value="Ensembl"/>
</dbReference>
<dbReference type="GO" id="GO:0002551">
    <property type="term" value="P:mast cell chemotaxis"/>
    <property type="evidence" value="ECO:0007669"/>
    <property type="project" value="Ensembl"/>
</dbReference>
<dbReference type="GO" id="GO:0043303">
    <property type="term" value="P:mast cell degranulation"/>
    <property type="evidence" value="ECO:0000250"/>
    <property type="project" value="UniProtKB"/>
</dbReference>
<dbReference type="GO" id="GO:0060374">
    <property type="term" value="P:mast cell differentiation"/>
    <property type="evidence" value="ECO:0000250"/>
    <property type="project" value="UniProtKB"/>
</dbReference>
<dbReference type="GO" id="GO:0070662">
    <property type="term" value="P:mast cell proliferation"/>
    <property type="evidence" value="ECO:0007669"/>
    <property type="project" value="Ensembl"/>
</dbReference>
<dbReference type="GO" id="GO:0035855">
    <property type="term" value="P:megakaryocyte development"/>
    <property type="evidence" value="ECO:0000250"/>
    <property type="project" value="UniProtKB"/>
</dbReference>
<dbReference type="GO" id="GO:0097326">
    <property type="term" value="P:melanocyte adhesion"/>
    <property type="evidence" value="ECO:0000250"/>
    <property type="project" value="UniProtKB"/>
</dbReference>
<dbReference type="GO" id="GO:0030318">
    <property type="term" value="P:melanocyte differentiation"/>
    <property type="evidence" value="ECO:0000250"/>
    <property type="project" value="UniProtKB"/>
</dbReference>
<dbReference type="GO" id="GO:0097324">
    <property type="term" value="P:melanocyte migration"/>
    <property type="evidence" value="ECO:0000250"/>
    <property type="project" value="UniProtKB"/>
</dbReference>
<dbReference type="GO" id="GO:0002318">
    <property type="term" value="P:myeloid progenitor cell differentiation"/>
    <property type="evidence" value="ECO:0007669"/>
    <property type="project" value="Ensembl"/>
</dbReference>
<dbReference type="GO" id="GO:0051093">
    <property type="term" value="P:negative regulation of developmental process"/>
    <property type="evidence" value="ECO:0007669"/>
    <property type="project" value="Ensembl"/>
</dbReference>
<dbReference type="GO" id="GO:0043069">
    <property type="term" value="P:negative regulation of programmed cell death"/>
    <property type="evidence" value="ECO:0007669"/>
    <property type="project" value="Ensembl"/>
</dbReference>
<dbReference type="GO" id="GO:2000242">
    <property type="term" value="P:negative regulation of reproductive process"/>
    <property type="evidence" value="ECO:0007669"/>
    <property type="project" value="Ensembl"/>
</dbReference>
<dbReference type="GO" id="GO:0001541">
    <property type="term" value="P:ovarian follicle development"/>
    <property type="evidence" value="ECO:0000250"/>
    <property type="project" value="UniProtKB"/>
</dbReference>
<dbReference type="GO" id="GO:0043473">
    <property type="term" value="P:pigmentation"/>
    <property type="evidence" value="ECO:0000250"/>
    <property type="project" value="UniProtKB"/>
</dbReference>
<dbReference type="GO" id="GO:0030335">
    <property type="term" value="P:positive regulation of cell migration"/>
    <property type="evidence" value="ECO:0000318"/>
    <property type="project" value="GO_Central"/>
</dbReference>
<dbReference type="GO" id="GO:0008284">
    <property type="term" value="P:positive regulation of cell population proliferation"/>
    <property type="evidence" value="ECO:0000318"/>
    <property type="project" value="GO_Central"/>
</dbReference>
<dbReference type="GO" id="GO:0002732">
    <property type="term" value="P:positive regulation of dendritic cell cytokine production"/>
    <property type="evidence" value="ECO:0000250"/>
    <property type="project" value="UniProtKB"/>
</dbReference>
<dbReference type="GO" id="GO:0043410">
    <property type="term" value="P:positive regulation of MAPK cascade"/>
    <property type="evidence" value="ECO:0007669"/>
    <property type="project" value="Ensembl"/>
</dbReference>
<dbReference type="GO" id="GO:0032765">
    <property type="term" value="P:positive regulation of mast cell cytokine production"/>
    <property type="evidence" value="ECO:0000250"/>
    <property type="project" value="UniProtKB"/>
</dbReference>
<dbReference type="GO" id="GO:0070668">
    <property type="term" value="P:positive regulation of mast cell proliferation"/>
    <property type="evidence" value="ECO:0007669"/>
    <property type="project" value="Ensembl"/>
</dbReference>
<dbReference type="GO" id="GO:0046427">
    <property type="term" value="P:positive regulation of receptor signaling pathway via JAK-STAT"/>
    <property type="evidence" value="ECO:0000318"/>
    <property type="project" value="GO_Central"/>
</dbReference>
<dbReference type="GO" id="GO:1905065">
    <property type="term" value="P:positive regulation of vascular associated smooth muscle cell differentiation"/>
    <property type="evidence" value="ECO:0007669"/>
    <property type="project" value="Ensembl"/>
</dbReference>
<dbReference type="GO" id="GO:0008360">
    <property type="term" value="P:regulation of cell shape"/>
    <property type="evidence" value="ECO:0000250"/>
    <property type="project" value="UniProtKB"/>
</dbReference>
<dbReference type="GO" id="GO:0009314">
    <property type="term" value="P:response to radiation"/>
    <property type="evidence" value="ECO:0007669"/>
    <property type="project" value="Ensembl"/>
</dbReference>
<dbReference type="GO" id="GO:0007286">
    <property type="term" value="P:spermatid development"/>
    <property type="evidence" value="ECO:0007669"/>
    <property type="project" value="Ensembl"/>
</dbReference>
<dbReference type="GO" id="GO:0007283">
    <property type="term" value="P:spermatogenesis"/>
    <property type="evidence" value="ECO:0000250"/>
    <property type="project" value="UniProtKB"/>
</dbReference>
<dbReference type="GO" id="GO:0048863">
    <property type="term" value="P:stem cell differentiation"/>
    <property type="evidence" value="ECO:0000250"/>
    <property type="project" value="UniProtKB"/>
</dbReference>
<dbReference type="GO" id="GO:0030217">
    <property type="term" value="P:T cell differentiation"/>
    <property type="evidence" value="ECO:0000250"/>
    <property type="project" value="UniProtKB"/>
</dbReference>
<dbReference type="CDD" id="cd00096">
    <property type="entry name" value="Ig"/>
    <property type="match status" value="1"/>
</dbReference>
<dbReference type="CDD" id="cd05860">
    <property type="entry name" value="IgI_4_SCFR"/>
    <property type="match status" value="1"/>
</dbReference>
<dbReference type="CDD" id="cd05104">
    <property type="entry name" value="PTKc_Kit"/>
    <property type="match status" value="1"/>
</dbReference>
<dbReference type="FunFam" id="1.10.510.10:FF:000177">
    <property type="entry name" value="Mast/stem cell growth factor receptor"/>
    <property type="match status" value="1"/>
</dbReference>
<dbReference type="FunFam" id="2.60.40.10:FF:000422">
    <property type="entry name" value="Mast/stem cell growth factor receptor"/>
    <property type="match status" value="1"/>
</dbReference>
<dbReference type="FunFam" id="2.60.40.10:FF:000429">
    <property type="entry name" value="Mast/stem cell growth factor receptor"/>
    <property type="match status" value="1"/>
</dbReference>
<dbReference type="FunFam" id="2.60.40.10:FF:000469">
    <property type="entry name" value="Mast/stem cell growth factor receptor"/>
    <property type="match status" value="1"/>
</dbReference>
<dbReference type="FunFam" id="2.60.40.10:FF:000544">
    <property type="entry name" value="Mast/stem cell growth factor receptor"/>
    <property type="match status" value="1"/>
</dbReference>
<dbReference type="FunFam" id="2.60.40.10:FF:000815">
    <property type="entry name" value="Mast/stem cell growth factor receptor"/>
    <property type="match status" value="1"/>
</dbReference>
<dbReference type="FunFam" id="3.30.200.20:FF:000025">
    <property type="entry name" value="Platelet-derived growth factor receptor alpha"/>
    <property type="match status" value="1"/>
</dbReference>
<dbReference type="Gene3D" id="2.60.40.10">
    <property type="entry name" value="Immunoglobulins"/>
    <property type="match status" value="5"/>
</dbReference>
<dbReference type="Gene3D" id="3.30.200.20">
    <property type="entry name" value="Phosphorylase Kinase, domain 1"/>
    <property type="match status" value="1"/>
</dbReference>
<dbReference type="Gene3D" id="1.10.510.10">
    <property type="entry name" value="Transferase(Phosphotransferase) domain 1"/>
    <property type="match status" value="1"/>
</dbReference>
<dbReference type="InterPro" id="IPR007110">
    <property type="entry name" value="Ig-like_dom"/>
</dbReference>
<dbReference type="InterPro" id="IPR036179">
    <property type="entry name" value="Ig-like_dom_sf"/>
</dbReference>
<dbReference type="InterPro" id="IPR013783">
    <property type="entry name" value="Ig-like_fold"/>
</dbReference>
<dbReference type="InterPro" id="IPR003599">
    <property type="entry name" value="Ig_sub"/>
</dbReference>
<dbReference type="InterPro" id="IPR003598">
    <property type="entry name" value="Ig_sub2"/>
</dbReference>
<dbReference type="InterPro" id="IPR013151">
    <property type="entry name" value="Immunoglobulin_dom"/>
</dbReference>
<dbReference type="InterPro" id="IPR011009">
    <property type="entry name" value="Kinase-like_dom_sf"/>
</dbReference>
<dbReference type="InterPro" id="IPR000719">
    <property type="entry name" value="Prot_kinase_dom"/>
</dbReference>
<dbReference type="InterPro" id="IPR017441">
    <property type="entry name" value="Protein_kinase_ATP_BS"/>
</dbReference>
<dbReference type="InterPro" id="IPR050122">
    <property type="entry name" value="RTK"/>
</dbReference>
<dbReference type="InterPro" id="IPR027263">
    <property type="entry name" value="SCGF_receptor"/>
</dbReference>
<dbReference type="InterPro" id="IPR001245">
    <property type="entry name" value="Ser-Thr/Tyr_kinase_cat_dom"/>
</dbReference>
<dbReference type="InterPro" id="IPR008266">
    <property type="entry name" value="Tyr_kinase_AS"/>
</dbReference>
<dbReference type="InterPro" id="IPR020635">
    <property type="entry name" value="Tyr_kinase_cat_dom"/>
</dbReference>
<dbReference type="InterPro" id="IPR001824">
    <property type="entry name" value="Tyr_kinase_rcpt_3_CS"/>
</dbReference>
<dbReference type="PANTHER" id="PTHR24416:SF46">
    <property type="entry name" value="MAST_STEM CELL GROWTH FACTOR RECEPTOR KIT"/>
    <property type="match status" value="1"/>
</dbReference>
<dbReference type="PANTHER" id="PTHR24416">
    <property type="entry name" value="TYROSINE-PROTEIN KINASE RECEPTOR"/>
    <property type="match status" value="1"/>
</dbReference>
<dbReference type="Pfam" id="PF00047">
    <property type="entry name" value="ig"/>
    <property type="match status" value="1"/>
</dbReference>
<dbReference type="Pfam" id="PF07714">
    <property type="entry name" value="PK_Tyr_Ser-Thr"/>
    <property type="match status" value="1"/>
</dbReference>
<dbReference type="PIRSF" id="PIRSF500951">
    <property type="entry name" value="SCGF_recepter"/>
    <property type="match status" value="1"/>
</dbReference>
<dbReference type="PIRSF" id="PIRSF000615">
    <property type="entry name" value="TyrPK_CSF1-R"/>
    <property type="match status" value="1"/>
</dbReference>
<dbReference type="SMART" id="SM00409">
    <property type="entry name" value="IG"/>
    <property type="match status" value="4"/>
</dbReference>
<dbReference type="SMART" id="SM00408">
    <property type="entry name" value="IGc2"/>
    <property type="match status" value="2"/>
</dbReference>
<dbReference type="SMART" id="SM00219">
    <property type="entry name" value="TyrKc"/>
    <property type="match status" value="1"/>
</dbReference>
<dbReference type="SUPFAM" id="SSF48726">
    <property type="entry name" value="Immunoglobulin"/>
    <property type="match status" value="3"/>
</dbReference>
<dbReference type="SUPFAM" id="SSF56112">
    <property type="entry name" value="Protein kinase-like (PK-like)"/>
    <property type="match status" value="1"/>
</dbReference>
<dbReference type="PROSITE" id="PS50835">
    <property type="entry name" value="IG_LIKE"/>
    <property type="match status" value="2"/>
</dbReference>
<dbReference type="PROSITE" id="PS00107">
    <property type="entry name" value="PROTEIN_KINASE_ATP"/>
    <property type="match status" value="1"/>
</dbReference>
<dbReference type="PROSITE" id="PS50011">
    <property type="entry name" value="PROTEIN_KINASE_DOM"/>
    <property type="match status" value="1"/>
</dbReference>
<dbReference type="PROSITE" id="PS00109">
    <property type="entry name" value="PROTEIN_KINASE_TYR"/>
    <property type="match status" value="1"/>
</dbReference>
<dbReference type="PROSITE" id="PS00240">
    <property type="entry name" value="RECEPTOR_TYR_KIN_III"/>
    <property type="match status" value="1"/>
</dbReference>
<comment type="function">
    <text evidence="1">Tyrosine-protein kinase that acts as a cell-surface receptor for the cytokine KITLG/SCF and plays an essential role in the regulation of cell survival and proliferation, hematopoiesis, stem cell maintenance, gametogenesis, mast cell development, migration and function, and in melanogenesis. In response to KITLG/SCF binding, KIT can activate several signaling pathways. Phosphorylates PIK3R1, PLCG1, SH2B2/APS and CBL. Activates the AKT1 signaling pathway by phosphorylation of PIK3R1, the regulatory subunit of phosphatidylinositol 3-kinase. Activated KIT also transmits signals via GRB2 and activation of RAS, RAF1 and the MAP kinases MAPK1/ERK2 and/or MAPK3/ERK1. Promotes activation of STAT family members STAT1, STAT3, STAT5A and STAT5B. Activation of PLCG1 leads to the production of the cellular signaling molecules diacylglycerol and inositol 1,4,5-trisphosphate. KIT signaling is modulated by protein phosphatases, and by rapid internalization and degradation of the receptor. Activated KIT promotes phosphorylation of the protein phosphatases PTPN6/SHP-1 and PTPRU, and of the transcription factors STAT1, STAT3, STAT5A and STAT5B. Promotes phosphorylation of PIK3R1, CBL, CRK (isoform Crk-II), LYN, MAPK1/ERK2 and/or MAPK3/ERK1, PLCG1, SRC and SHC1 (By similarity).</text>
</comment>
<comment type="catalytic activity">
    <reaction evidence="7">
        <text>L-tyrosyl-[protein] + ATP = O-phospho-L-tyrosyl-[protein] + ADP + H(+)</text>
        <dbReference type="Rhea" id="RHEA:10596"/>
        <dbReference type="Rhea" id="RHEA-COMP:10136"/>
        <dbReference type="Rhea" id="RHEA-COMP:20101"/>
        <dbReference type="ChEBI" id="CHEBI:15378"/>
        <dbReference type="ChEBI" id="CHEBI:30616"/>
        <dbReference type="ChEBI" id="CHEBI:46858"/>
        <dbReference type="ChEBI" id="CHEBI:61978"/>
        <dbReference type="ChEBI" id="CHEBI:456216"/>
        <dbReference type="EC" id="2.7.10.1"/>
    </reaction>
</comment>
<comment type="activity regulation">
    <text evidence="1">Present in an inactive conformation in the absence of bound ligand. KITLG/SCF binding leads to dimerization and activation by autophosphorylation on tyrosine residues. Activity is down-regulated by PRKCA-mediated phosphorylation on serine residues (By similarity).</text>
</comment>
<comment type="subunit">
    <text evidence="2 3">Monomer in the absence of bound KITLG/SCF. Homodimer in the presence of bound KITLG/SCF, forming a heterotetramer with two KITLG/SCF molecules. Interacts (via phosphorylated tyrosine residues) with the adapter proteins GRB2 and GRB7 (via SH2 domain), and SH2B2/APS. Interacts (via C-terminus) with MPDZ (via the tenth PDZ domain). Interacts (via phosphorylated tyrosine residues) with PIK3R1 and PIK3 catalytic subunit. Interacts (via phosphorylated tyrosine) with CRK (isoform Crk-II), FYN, SHC1 and MATK/CHK (via SH2 domain). Interacts with LYN and FES/FPS. Interacts (via phosphorylated tyrosine residues) with the protein phosphatases PTPN6/SHP-1 (via SH2 domain), PTPN11/SHP-2 (via SH2 domain) and PTPRU. Interacts with PLCG1. Interacts with DOK1 and TEC. Interacts with IL1RAP (independent of stimulation with KITLG/SCF). A mast cell-specific KITLG/SCF-induced interleukin-33 signaling complex contains IL1RL1, IL1RAP, KIT and MYD88 (By similarity).</text>
</comment>
<comment type="subcellular location">
    <subcellularLocation>
        <location>Cell membrane</location>
        <topology>Single-pass type I membrane protein</topology>
    </subcellularLocation>
</comment>
<comment type="alternative products">
    <event type="alternative splicing"/>
    <isoform>
        <id>O97799-1</id>
        <name>1</name>
        <sequence type="displayed"/>
    </isoform>
    <isoform>
        <id>O97799-2</id>
        <name>2</name>
        <sequence type="described" ref="VSP_020224"/>
    </isoform>
</comment>
<comment type="PTM">
    <text evidence="1">Ubiquitinated by SOCS6. KIT is rapidly ubiquitinated after autophosphorylation induced by KITLG/SCF binding, leading to internalization and degradation.</text>
</comment>
<comment type="PTM">
    <text evidence="1">Autophosphorylated on tyrosine residues. KITLG/SCF binding promotes autophosphorylation. Phosphorylated tyrosine residues are important for interaction with specific binding partners (By similarity).</text>
</comment>
<comment type="miscellaneous">
    <text evidence="1">Numerous proteins are phosphorylated in response to KIT signaling, but it is not evident to determine which are directly phosphorylated by KIT under in vivo conditions.</text>
</comment>
<comment type="similarity">
    <text evidence="6">Belongs to the protein kinase superfamily. Tyr protein kinase family. CSF-1/PDGF receptor subfamily.</text>
</comment>
<evidence type="ECO:0000250" key="1"/>
<evidence type="ECO:0000250" key="2">
    <source>
        <dbReference type="UniProtKB" id="P05532"/>
    </source>
</evidence>
<evidence type="ECO:0000250" key="3">
    <source>
        <dbReference type="UniProtKB" id="P10721"/>
    </source>
</evidence>
<evidence type="ECO:0000255" key="4"/>
<evidence type="ECO:0000255" key="5">
    <source>
        <dbReference type="PROSITE-ProRule" id="PRU00114"/>
    </source>
</evidence>
<evidence type="ECO:0000255" key="6">
    <source>
        <dbReference type="PROSITE-ProRule" id="PRU00159"/>
    </source>
</evidence>
<evidence type="ECO:0000255" key="7">
    <source>
        <dbReference type="PROSITE-ProRule" id="PRU10028"/>
    </source>
</evidence>
<evidence type="ECO:0000303" key="8">
    <source>
    </source>
</evidence>
<evidence type="ECO:0000303" key="9">
    <source ref="3"/>
</evidence>
<evidence type="ECO:0000305" key="10"/>
<sequence>MRGARGAWDFLCVLLLLLLLGVQTGSSQPSVSPGEPSLPSIHPAKSELIVSVGDELRLSCTDPGFVKWTFETLGQLNENTHNEWITEKAEAGHTGNYTCTNRDGLSRSIYVFVRDPAKLFLVDLPLYGKEGNDTLVRCPLTDPEVTNYSLRGCEGKPLPKDLTFVADPKAGITIRNVKREYHRLCLHCSADQKGRTVLSKKFTLKVRAAIRAVPVVSVSKTSSLLKEGEAFSVMCFIKDVSSFVDSMWIKENSQQTNAQTQSNSWHHGDFNFERQEKLIISSARVNDSGVFMCYANNTFGSANVTTTLEVVDKGFINIFPMMSTTIFVNDGENVDLIVEYEAYPKPEHQQWIYMNRTFTDKWEDYPKSDNESNIRYVSELHLTRLKGNEGGTYTFQVSNSDVNSSVTFNVYVNTKPEILTHESLTNGMLQCVVAGFPEPAVDWYFCPGAEQRCSVPIGPMDVQMQNSSLSPSGKLVVQSSIDYSAFKHNGTVECRAYNNVGRSSAFFNFAFKGNSKEQIHPHTLFTPLLIGFVIAAGMMCIIVMILTYKYLQKPMYEVQWKVVEEINGNNYVYIDPTQLPYDHKWEFPRNRLSFGKTLGAGAFGKVVEATAYGLIKSDAAMTVAVKMLKPSAHLTEREALMSELKVLSYLGNHMNIVNLLGACTVGGPTLVITEYCCYGDLLNFLRRKRDSFICSKQEDHGEVALYKNLLHSKESSCSDSTNEYMDMKPGVSYVVPTKADKRRSARIGSYIERDVTPAIMEDDELALDLEDLLSFSYQVAKGMAFLASKNCIHRDLAARNILLTHGRITKICDFGLARDIKNDSNYVVKGNARLPVKWMAPESIFNCVYTFESDVWSYGIFLWELFSLGSSPYPGMPVDSKFYKMIKEGFRMLSPEHAPAEMYDIMKTCWDADPLKRPTFKQIVQLIEKQISDSTNHIYSNLANCSPNPERPVVDHSVRINSVGSSASSTQPLLVHEDV</sequence>
<protein>
    <recommendedName>
        <fullName>Mast/stem cell growth factor receptor Kit</fullName>
        <shortName>SCFR</shortName>
        <ecNumber>2.7.10.1</ecNumber>
    </recommendedName>
    <alternativeName>
        <fullName>Proto-oncogene c-Kit</fullName>
    </alternativeName>
    <alternativeName>
        <fullName>Tyrosine-protein kinase Kit</fullName>
    </alternativeName>
    <cdAntigenName>CD117</cdAntigenName>
</protein>
<organism>
    <name type="scientific">Canis lupus familiaris</name>
    <name type="common">Dog</name>
    <name type="synonym">Canis familiaris</name>
    <dbReference type="NCBI Taxonomy" id="9615"/>
    <lineage>
        <taxon>Eukaryota</taxon>
        <taxon>Metazoa</taxon>
        <taxon>Chordata</taxon>
        <taxon>Craniata</taxon>
        <taxon>Vertebrata</taxon>
        <taxon>Euteleostomi</taxon>
        <taxon>Mammalia</taxon>
        <taxon>Eutheria</taxon>
        <taxon>Laurasiatheria</taxon>
        <taxon>Carnivora</taxon>
        <taxon>Caniformia</taxon>
        <taxon>Canidae</taxon>
        <taxon>Canis</taxon>
    </lineage>
</organism>